<organism>
    <name type="scientific">Gallus gallus</name>
    <name type="common">Chicken</name>
    <dbReference type="NCBI Taxonomy" id="9031"/>
    <lineage>
        <taxon>Eukaryota</taxon>
        <taxon>Metazoa</taxon>
        <taxon>Chordata</taxon>
        <taxon>Craniata</taxon>
        <taxon>Vertebrata</taxon>
        <taxon>Euteleostomi</taxon>
        <taxon>Archelosauria</taxon>
        <taxon>Archosauria</taxon>
        <taxon>Dinosauria</taxon>
        <taxon>Saurischia</taxon>
        <taxon>Theropoda</taxon>
        <taxon>Coelurosauria</taxon>
        <taxon>Aves</taxon>
        <taxon>Neognathae</taxon>
        <taxon>Galloanserae</taxon>
        <taxon>Galliformes</taxon>
        <taxon>Phasianidae</taxon>
        <taxon>Phasianinae</taxon>
        <taxon>Gallus</taxon>
    </lineage>
</organism>
<keyword id="KW-0963">Cytoplasm</keyword>
<keyword id="KW-0539">Nucleus</keyword>
<keyword id="KW-1185">Reference proteome</keyword>
<keyword id="KW-0804">Transcription</keyword>
<keyword id="KW-0805">Transcription regulation</keyword>
<dbReference type="EMBL" id="AJ719538">
    <property type="protein sequence ID" value="CAG31197.1"/>
    <property type="molecule type" value="mRNA"/>
</dbReference>
<dbReference type="RefSeq" id="NP_001026209.1">
    <property type="nucleotide sequence ID" value="NM_001031038.1"/>
</dbReference>
<dbReference type="FunCoup" id="Q5ZM46">
    <property type="interactions" value="143"/>
</dbReference>
<dbReference type="STRING" id="9031.ENSGALP00000014722"/>
<dbReference type="PaxDb" id="9031-ENSGALP00000014722"/>
<dbReference type="GeneID" id="421301"/>
<dbReference type="KEGG" id="gga:421301"/>
<dbReference type="CTD" id="81606"/>
<dbReference type="VEuPathDB" id="HostDB:geneid_421301"/>
<dbReference type="eggNOG" id="ENOG502S1QG">
    <property type="taxonomic scope" value="Eukaryota"/>
</dbReference>
<dbReference type="InParanoid" id="Q5ZM46"/>
<dbReference type="OrthoDB" id="8937789at2759"/>
<dbReference type="PhylomeDB" id="Q5ZM46"/>
<dbReference type="PRO" id="PR:Q5ZM46"/>
<dbReference type="Proteomes" id="UP000000539">
    <property type="component" value="Unassembled WGS sequence"/>
</dbReference>
<dbReference type="GO" id="GO:0005737">
    <property type="term" value="C:cytoplasm"/>
    <property type="evidence" value="ECO:0007669"/>
    <property type="project" value="UniProtKB-SubCell"/>
</dbReference>
<dbReference type="GO" id="GO:0005634">
    <property type="term" value="C:nucleus"/>
    <property type="evidence" value="ECO:0000318"/>
    <property type="project" value="GO_Central"/>
</dbReference>
<dbReference type="GO" id="GO:0045893">
    <property type="term" value="P:positive regulation of DNA-templated transcription"/>
    <property type="evidence" value="ECO:0000318"/>
    <property type="project" value="GO_Central"/>
</dbReference>
<dbReference type="InterPro" id="IPR013294">
    <property type="entry name" value="LBH"/>
</dbReference>
<dbReference type="InterPro" id="IPR038990">
    <property type="entry name" value="LBH_dom"/>
</dbReference>
<dbReference type="InterPro" id="IPR042945">
    <property type="entry name" value="LBH_dom_prot"/>
</dbReference>
<dbReference type="PANTHER" id="PTHR14987:SF2">
    <property type="entry name" value="PROTEIN LBH"/>
    <property type="match status" value="1"/>
</dbReference>
<dbReference type="PANTHER" id="PTHR14987">
    <property type="entry name" value="PROTEIN LBH-RELATED"/>
    <property type="match status" value="1"/>
</dbReference>
<dbReference type="Pfam" id="PF15317">
    <property type="entry name" value="Lbh"/>
    <property type="match status" value="1"/>
</dbReference>
<dbReference type="PIRSF" id="PIRSF008130">
    <property type="entry name" value="LBH"/>
    <property type="match status" value="1"/>
</dbReference>
<dbReference type="PRINTS" id="PR01881">
    <property type="entry name" value="LBHPROTEIN"/>
</dbReference>
<reference key="1">
    <citation type="journal article" date="2005" name="Genome Biol.">
        <title>Full-length cDNAs from chicken bursal lymphocytes to facilitate gene function analysis.</title>
        <authorList>
            <person name="Caldwell R.B."/>
            <person name="Kierzek A.M."/>
            <person name="Arakawa H."/>
            <person name="Bezzubov Y."/>
            <person name="Zaim J."/>
            <person name="Fiedler P."/>
            <person name="Kutter S."/>
            <person name="Blagodatski A."/>
            <person name="Kostovska D."/>
            <person name="Koter M."/>
            <person name="Plachy J."/>
            <person name="Carninci P."/>
            <person name="Hayashizaki Y."/>
            <person name="Buerstedde J.-M."/>
        </authorList>
    </citation>
    <scope>NUCLEOTIDE SEQUENCE [LARGE SCALE MRNA]</scope>
    <source>
        <strain>CB</strain>
        <tissue>Bursa of Fabricius</tissue>
    </source>
</reference>
<evidence type="ECO:0000250" key="1"/>
<evidence type="ECO:0000255" key="2"/>
<evidence type="ECO:0000256" key="3">
    <source>
        <dbReference type="SAM" id="MobiDB-lite"/>
    </source>
</evidence>
<evidence type="ECO:0000305" key="4"/>
<protein>
    <recommendedName>
        <fullName>Protein LBH</fullName>
    </recommendedName>
</protein>
<feature type="chain" id="PRO_0000324805" description="Protein LBH">
    <location>
        <begin position="1"/>
        <end position="106"/>
    </location>
</feature>
<feature type="domain" description="LBH" evidence="2">
    <location>
        <begin position="18"/>
        <end position="105"/>
    </location>
</feature>
<feature type="region of interest" description="Disordered" evidence="3">
    <location>
        <begin position="69"/>
        <end position="106"/>
    </location>
</feature>
<feature type="compositionally biased region" description="Acidic residues" evidence="3">
    <location>
        <begin position="86"/>
        <end position="96"/>
    </location>
</feature>
<feature type="compositionally biased region" description="Basic and acidic residues" evidence="3">
    <location>
        <begin position="97"/>
        <end position="106"/>
    </location>
</feature>
<comment type="function">
    <text evidence="1">Transcriptional activator.</text>
</comment>
<comment type="subcellular location">
    <subcellularLocation>
        <location evidence="1">Nucleus</location>
    </subcellularLocation>
    <subcellularLocation>
        <location evidence="1">Cytoplasm</location>
    </subcellularLocation>
</comment>
<comment type="similarity">
    <text evidence="4">Belongs to the LBH family.</text>
</comment>
<sequence length="106" mass="12094">MSVLCPLPCPDYLRSAEMTEVMMSTPAMDEIGLSPRKDGLSYQIFPDPSNFDCYCKLKDRLPSIVVEPTEGDVESGELRWPPEEFLVQEEEEEESCEDAKEDNKEQ</sequence>
<accession>Q5ZM46</accession>
<gene>
    <name type="primary">LBH</name>
    <name type="ORF">RCJMB04_3c23</name>
</gene>
<name>LBH_CHICK</name>
<proteinExistence type="inferred from homology"/>